<comment type="function">
    <text evidence="1">Participates actively in the response to hyperosmotic and heat shock by preventing the aggregation of stress-denatured proteins and by disaggregating proteins, also in an autonomous, DnaK-independent fashion. Unfolded proteins bind initially to DnaJ; upon interaction with the DnaJ-bound protein, DnaK hydrolyzes its bound ATP, resulting in the formation of a stable complex. GrpE releases ADP from DnaK; ATP binding to DnaK triggers the release of the substrate protein, thus completing the reaction cycle. Several rounds of ATP-dependent interactions between DnaJ, DnaK and GrpE are required for fully efficient folding. Also involved, together with DnaK and GrpE, in the DNA replication of plasmids through activation of initiation proteins.</text>
</comment>
<comment type="cofactor">
    <cofactor evidence="1">
        <name>Zn(2+)</name>
        <dbReference type="ChEBI" id="CHEBI:29105"/>
    </cofactor>
    <text evidence="1">Binds 2 Zn(2+) ions per monomer.</text>
</comment>
<comment type="subunit">
    <text evidence="1">Homodimer.</text>
</comment>
<comment type="subcellular location">
    <subcellularLocation>
        <location evidence="1">Cytoplasm</location>
    </subcellularLocation>
</comment>
<comment type="domain">
    <text evidence="1">The J domain is necessary and sufficient to stimulate DnaK ATPase activity. Zinc center 1 plays an important role in the autonomous, DnaK-independent chaperone activity of DnaJ. Zinc center 2 is essential for interaction with DnaK and for DnaJ activity.</text>
</comment>
<comment type="similarity">
    <text evidence="1">Belongs to the DnaJ family.</text>
</comment>
<organism>
    <name type="scientific">Oleidesulfovibrio alaskensis (strain ATCC BAA-1058 / DSM 17464 / G20)</name>
    <name type="common">Desulfovibrio alaskensis</name>
    <dbReference type="NCBI Taxonomy" id="207559"/>
    <lineage>
        <taxon>Bacteria</taxon>
        <taxon>Pseudomonadati</taxon>
        <taxon>Thermodesulfobacteriota</taxon>
        <taxon>Desulfovibrionia</taxon>
        <taxon>Desulfovibrionales</taxon>
        <taxon>Desulfovibrionaceae</taxon>
        <taxon>Oleidesulfovibrio</taxon>
    </lineage>
</organism>
<keyword id="KW-0143">Chaperone</keyword>
<keyword id="KW-0963">Cytoplasm</keyword>
<keyword id="KW-0235">DNA replication</keyword>
<keyword id="KW-0479">Metal-binding</keyword>
<keyword id="KW-1185">Reference proteome</keyword>
<keyword id="KW-0677">Repeat</keyword>
<keyword id="KW-0346">Stress response</keyword>
<keyword id="KW-0862">Zinc</keyword>
<keyword id="KW-0863">Zinc-finger</keyword>
<feature type="chain" id="PRO_1000085183" description="Chaperone protein DnaJ">
    <location>
        <begin position="1"/>
        <end position="375"/>
    </location>
</feature>
<feature type="domain" description="J" evidence="1">
    <location>
        <begin position="5"/>
        <end position="70"/>
    </location>
</feature>
<feature type="repeat" description="CXXCXGXG motif">
    <location>
        <begin position="149"/>
        <end position="156"/>
    </location>
</feature>
<feature type="repeat" description="CXXCXGXG motif">
    <location>
        <begin position="166"/>
        <end position="173"/>
    </location>
</feature>
<feature type="repeat" description="CXXCXGXG motif">
    <location>
        <begin position="188"/>
        <end position="195"/>
    </location>
</feature>
<feature type="repeat" description="CXXCXGXG motif">
    <location>
        <begin position="202"/>
        <end position="209"/>
    </location>
</feature>
<feature type="zinc finger region" description="CR-type" evidence="1">
    <location>
        <begin position="136"/>
        <end position="214"/>
    </location>
</feature>
<feature type="binding site" evidence="1">
    <location>
        <position position="149"/>
    </location>
    <ligand>
        <name>Zn(2+)</name>
        <dbReference type="ChEBI" id="CHEBI:29105"/>
        <label>1</label>
    </ligand>
</feature>
<feature type="binding site" evidence="1">
    <location>
        <position position="152"/>
    </location>
    <ligand>
        <name>Zn(2+)</name>
        <dbReference type="ChEBI" id="CHEBI:29105"/>
        <label>1</label>
    </ligand>
</feature>
<feature type="binding site" evidence="1">
    <location>
        <position position="166"/>
    </location>
    <ligand>
        <name>Zn(2+)</name>
        <dbReference type="ChEBI" id="CHEBI:29105"/>
        <label>2</label>
    </ligand>
</feature>
<feature type="binding site" evidence="1">
    <location>
        <position position="169"/>
    </location>
    <ligand>
        <name>Zn(2+)</name>
        <dbReference type="ChEBI" id="CHEBI:29105"/>
        <label>2</label>
    </ligand>
</feature>
<feature type="binding site" evidence="1">
    <location>
        <position position="188"/>
    </location>
    <ligand>
        <name>Zn(2+)</name>
        <dbReference type="ChEBI" id="CHEBI:29105"/>
        <label>2</label>
    </ligand>
</feature>
<feature type="binding site" evidence="1">
    <location>
        <position position="191"/>
    </location>
    <ligand>
        <name>Zn(2+)</name>
        <dbReference type="ChEBI" id="CHEBI:29105"/>
        <label>2</label>
    </ligand>
</feature>
<feature type="binding site" evidence="1">
    <location>
        <position position="202"/>
    </location>
    <ligand>
        <name>Zn(2+)</name>
        <dbReference type="ChEBI" id="CHEBI:29105"/>
        <label>1</label>
    </ligand>
</feature>
<feature type="binding site" evidence="1">
    <location>
        <position position="205"/>
    </location>
    <ligand>
        <name>Zn(2+)</name>
        <dbReference type="ChEBI" id="CHEBI:29105"/>
        <label>1</label>
    </ligand>
</feature>
<name>DNAJ_OLEA2</name>
<gene>
    <name evidence="1" type="primary">dnaJ</name>
    <name type="ordered locus">Dde_0248</name>
</gene>
<protein>
    <recommendedName>
        <fullName evidence="1">Chaperone protein DnaJ</fullName>
    </recommendedName>
</protein>
<proteinExistence type="inferred from homology"/>
<reference key="1">
    <citation type="journal article" date="2011" name="J. Bacteriol.">
        <title>Complete genome sequence and updated annotation of Desulfovibrio alaskensis G20.</title>
        <authorList>
            <person name="Hauser L.J."/>
            <person name="Land M.L."/>
            <person name="Brown S.D."/>
            <person name="Larimer F."/>
            <person name="Keller K.L."/>
            <person name="Rapp-Giles B.J."/>
            <person name="Price M.N."/>
            <person name="Lin M."/>
            <person name="Bruce D.C."/>
            <person name="Detter J.C."/>
            <person name="Tapia R."/>
            <person name="Han C.S."/>
            <person name="Goodwin L.A."/>
            <person name="Cheng J.F."/>
            <person name="Pitluck S."/>
            <person name="Copeland A."/>
            <person name="Lucas S."/>
            <person name="Nolan M."/>
            <person name="Lapidus A.L."/>
            <person name="Palumbo A.V."/>
            <person name="Wall J.D."/>
        </authorList>
    </citation>
    <scope>NUCLEOTIDE SEQUENCE [LARGE SCALE GENOMIC DNA]</scope>
    <source>
        <strain>ATCC BAA-1058 / DSM 17464 / G20</strain>
    </source>
</reference>
<evidence type="ECO:0000255" key="1">
    <source>
        <dbReference type="HAMAP-Rule" id="MF_01152"/>
    </source>
</evidence>
<dbReference type="EMBL" id="CP000112">
    <property type="protein sequence ID" value="ABB37049.1"/>
    <property type="molecule type" value="Genomic_DNA"/>
</dbReference>
<dbReference type="RefSeq" id="WP_011366397.1">
    <property type="nucleotide sequence ID" value="NC_007519.1"/>
</dbReference>
<dbReference type="SMR" id="Q316U7"/>
<dbReference type="STRING" id="207559.Dde_0248"/>
<dbReference type="KEGG" id="dde:Dde_0248"/>
<dbReference type="eggNOG" id="COG0484">
    <property type="taxonomic scope" value="Bacteria"/>
</dbReference>
<dbReference type="HOGENOM" id="CLU_017633_0_7_7"/>
<dbReference type="Proteomes" id="UP000002710">
    <property type="component" value="Chromosome"/>
</dbReference>
<dbReference type="GO" id="GO:0005737">
    <property type="term" value="C:cytoplasm"/>
    <property type="evidence" value="ECO:0007669"/>
    <property type="project" value="UniProtKB-SubCell"/>
</dbReference>
<dbReference type="GO" id="GO:0005524">
    <property type="term" value="F:ATP binding"/>
    <property type="evidence" value="ECO:0007669"/>
    <property type="project" value="InterPro"/>
</dbReference>
<dbReference type="GO" id="GO:0031072">
    <property type="term" value="F:heat shock protein binding"/>
    <property type="evidence" value="ECO:0007669"/>
    <property type="project" value="InterPro"/>
</dbReference>
<dbReference type="GO" id="GO:0051082">
    <property type="term" value="F:unfolded protein binding"/>
    <property type="evidence" value="ECO:0007669"/>
    <property type="project" value="UniProtKB-UniRule"/>
</dbReference>
<dbReference type="GO" id="GO:0008270">
    <property type="term" value="F:zinc ion binding"/>
    <property type="evidence" value="ECO:0007669"/>
    <property type="project" value="UniProtKB-UniRule"/>
</dbReference>
<dbReference type="GO" id="GO:0051085">
    <property type="term" value="P:chaperone cofactor-dependent protein refolding"/>
    <property type="evidence" value="ECO:0007669"/>
    <property type="project" value="TreeGrafter"/>
</dbReference>
<dbReference type="GO" id="GO:0006260">
    <property type="term" value="P:DNA replication"/>
    <property type="evidence" value="ECO:0007669"/>
    <property type="project" value="UniProtKB-KW"/>
</dbReference>
<dbReference type="GO" id="GO:0042026">
    <property type="term" value="P:protein refolding"/>
    <property type="evidence" value="ECO:0007669"/>
    <property type="project" value="TreeGrafter"/>
</dbReference>
<dbReference type="GO" id="GO:0009408">
    <property type="term" value="P:response to heat"/>
    <property type="evidence" value="ECO:0007669"/>
    <property type="project" value="InterPro"/>
</dbReference>
<dbReference type="CDD" id="cd06257">
    <property type="entry name" value="DnaJ"/>
    <property type="match status" value="1"/>
</dbReference>
<dbReference type="CDD" id="cd10747">
    <property type="entry name" value="DnaJ_C"/>
    <property type="match status" value="1"/>
</dbReference>
<dbReference type="FunFam" id="1.10.287.110:FF:000034">
    <property type="entry name" value="Chaperone protein DnaJ"/>
    <property type="match status" value="1"/>
</dbReference>
<dbReference type="FunFam" id="2.60.260.20:FF:000005">
    <property type="entry name" value="Chaperone protein dnaJ 1, mitochondrial"/>
    <property type="match status" value="1"/>
</dbReference>
<dbReference type="FunFam" id="2.10.230.10:FF:000002">
    <property type="entry name" value="Molecular chaperone DnaJ"/>
    <property type="match status" value="1"/>
</dbReference>
<dbReference type="Gene3D" id="1.10.287.110">
    <property type="entry name" value="DnaJ domain"/>
    <property type="match status" value="1"/>
</dbReference>
<dbReference type="Gene3D" id="2.10.230.10">
    <property type="entry name" value="Heat shock protein DnaJ, cysteine-rich domain"/>
    <property type="match status" value="1"/>
</dbReference>
<dbReference type="Gene3D" id="2.60.260.20">
    <property type="entry name" value="Urease metallochaperone UreE, N-terminal domain"/>
    <property type="match status" value="2"/>
</dbReference>
<dbReference type="HAMAP" id="MF_01152">
    <property type="entry name" value="DnaJ"/>
    <property type="match status" value="1"/>
</dbReference>
<dbReference type="InterPro" id="IPR012724">
    <property type="entry name" value="DnaJ"/>
</dbReference>
<dbReference type="InterPro" id="IPR002939">
    <property type="entry name" value="DnaJ_C"/>
</dbReference>
<dbReference type="InterPro" id="IPR001623">
    <property type="entry name" value="DnaJ_domain"/>
</dbReference>
<dbReference type="InterPro" id="IPR018253">
    <property type="entry name" value="DnaJ_domain_CS"/>
</dbReference>
<dbReference type="InterPro" id="IPR008971">
    <property type="entry name" value="HSP40/DnaJ_pept-bd"/>
</dbReference>
<dbReference type="InterPro" id="IPR001305">
    <property type="entry name" value="HSP_DnaJ_Cys-rich_dom"/>
</dbReference>
<dbReference type="InterPro" id="IPR036410">
    <property type="entry name" value="HSP_DnaJ_Cys-rich_dom_sf"/>
</dbReference>
<dbReference type="InterPro" id="IPR036869">
    <property type="entry name" value="J_dom_sf"/>
</dbReference>
<dbReference type="NCBIfam" id="TIGR02349">
    <property type="entry name" value="DnaJ_bact"/>
    <property type="match status" value="1"/>
</dbReference>
<dbReference type="NCBIfam" id="NF008035">
    <property type="entry name" value="PRK10767.1"/>
    <property type="match status" value="1"/>
</dbReference>
<dbReference type="NCBIfam" id="NF010894">
    <property type="entry name" value="PRK14301.1"/>
    <property type="match status" value="1"/>
</dbReference>
<dbReference type="PANTHER" id="PTHR43096:SF10">
    <property type="entry name" value="CHAPERONE PROTEIN DNAJ A6, CHLOROPLASTIC"/>
    <property type="match status" value="1"/>
</dbReference>
<dbReference type="PANTHER" id="PTHR43096">
    <property type="entry name" value="DNAJ HOMOLOG 1, MITOCHONDRIAL-RELATED"/>
    <property type="match status" value="1"/>
</dbReference>
<dbReference type="Pfam" id="PF00226">
    <property type="entry name" value="DnaJ"/>
    <property type="match status" value="1"/>
</dbReference>
<dbReference type="Pfam" id="PF01556">
    <property type="entry name" value="DnaJ_C"/>
    <property type="match status" value="1"/>
</dbReference>
<dbReference type="Pfam" id="PF00684">
    <property type="entry name" value="DnaJ_CXXCXGXG"/>
    <property type="match status" value="1"/>
</dbReference>
<dbReference type="PRINTS" id="PR00625">
    <property type="entry name" value="JDOMAIN"/>
</dbReference>
<dbReference type="SMART" id="SM00271">
    <property type="entry name" value="DnaJ"/>
    <property type="match status" value="1"/>
</dbReference>
<dbReference type="SUPFAM" id="SSF46565">
    <property type="entry name" value="Chaperone J-domain"/>
    <property type="match status" value="1"/>
</dbReference>
<dbReference type="SUPFAM" id="SSF57938">
    <property type="entry name" value="DnaJ/Hsp40 cysteine-rich domain"/>
    <property type="match status" value="1"/>
</dbReference>
<dbReference type="SUPFAM" id="SSF49493">
    <property type="entry name" value="HSP40/DnaJ peptide-binding domain"/>
    <property type="match status" value="2"/>
</dbReference>
<dbReference type="PROSITE" id="PS00636">
    <property type="entry name" value="DNAJ_1"/>
    <property type="match status" value="1"/>
</dbReference>
<dbReference type="PROSITE" id="PS50076">
    <property type="entry name" value="DNAJ_2"/>
    <property type="match status" value="1"/>
</dbReference>
<dbReference type="PROSITE" id="PS51188">
    <property type="entry name" value="ZF_CR"/>
    <property type="match status" value="1"/>
</dbReference>
<sequence length="375" mass="40904">MSQRDYYEVLGVSRDAADDEIKRAYRKKAMEFHPDRNPDNPEAEAKFKEAAEAYDVLRDAEKRARYDRFGHAGVNGNGYGGGGGFSSTEDIFAHFGDIFGDLFGFAGMGGARGPRPQAGSDLRYNLNISFRQAARGDEVTLRIPKNVTCPDCSGSGAAPGTQPETCPQCGGSGQVVRQQGFFQMAMPCSACRGEGRIVRNPCPRCRGAGQVQDIRELSVRIPAGVDTGNRLRLRGEGEPGVHGGPPGDLYVVIRVDDDKTFRRQGQDLVVRKEISFVQAILGDKVEVPTLDDPVTVDIPRGTQSGEVFRIAGKGLPHLGSSQTGALLVEVTVRIPSSVNDEQEKLLREFERLEENRPLRKVKNMFKKAGKAMGMD</sequence>
<accession>Q316U7</accession>